<organism>
    <name type="scientific">Rickettsia prowazekii (strain Madrid E)</name>
    <dbReference type="NCBI Taxonomy" id="272947"/>
    <lineage>
        <taxon>Bacteria</taxon>
        <taxon>Pseudomonadati</taxon>
        <taxon>Pseudomonadota</taxon>
        <taxon>Alphaproteobacteria</taxon>
        <taxon>Rickettsiales</taxon>
        <taxon>Rickettsiaceae</taxon>
        <taxon>Rickettsieae</taxon>
        <taxon>Rickettsia</taxon>
        <taxon>typhus group</taxon>
    </lineage>
</organism>
<dbReference type="EC" id="7.2.2.20" evidence="1"/>
<dbReference type="EMBL" id="AJ235273">
    <property type="protein sequence ID" value="CAA15259.1"/>
    <property type="molecule type" value="Genomic_DNA"/>
</dbReference>
<dbReference type="PIR" id="C71645">
    <property type="entry name" value="C71645"/>
</dbReference>
<dbReference type="RefSeq" id="NP_221183.1">
    <property type="nucleotide sequence ID" value="NC_000963.1"/>
</dbReference>
<dbReference type="RefSeq" id="WP_004596821.1">
    <property type="nucleotide sequence ID" value="NC_000963.1"/>
</dbReference>
<dbReference type="SMR" id="Q9ZCC4"/>
<dbReference type="STRING" id="272947.gene:17555903"/>
<dbReference type="EnsemblBacteria" id="CAA15259">
    <property type="protein sequence ID" value="CAA15259"/>
    <property type="gene ID" value="CAA15259"/>
</dbReference>
<dbReference type="KEGG" id="rpr:RP834"/>
<dbReference type="PATRIC" id="fig|272947.5.peg.871"/>
<dbReference type="eggNOG" id="COG1121">
    <property type="taxonomic scope" value="Bacteria"/>
</dbReference>
<dbReference type="HOGENOM" id="CLU_000604_1_11_5"/>
<dbReference type="OrthoDB" id="9780942at2"/>
<dbReference type="Proteomes" id="UP000002480">
    <property type="component" value="Chromosome"/>
</dbReference>
<dbReference type="GO" id="GO:0005886">
    <property type="term" value="C:plasma membrane"/>
    <property type="evidence" value="ECO:0007669"/>
    <property type="project" value="UniProtKB-SubCell"/>
</dbReference>
<dbReference type="GO" id="GO:0015633">
    <property type="term" value="F:ABC-type zinc transporter activity"/>
    <property type="evidence" value="ECO:0007669"/>
    <property type="project" value="UniProtKB-EC"/>
</dbReference>
<dbReference type="GO" id="GO:0005524">
    <property type="term" value="F:ATP binding"/>
    <property type="evidence" value="ECO:0007669"/>
    <property type="project" value="UniProtKB-KW"/>
</dbReference>
<dbReference type="GO" id="GO:0016887">
    <property type="term" value="F:ATP hydrolysis activity"/>
    <property type="evidence" value="ECO:0007669"/>
    <property type="project" value="InterPro"/>
</dbReference>
<dbReference type="GO" id="GO:0010043">
    <property type="term" value="P:response to zinc ion"/>
    <property type="evidence" value="ECO:0007669"/>
    <property type="project" value="TreeGrafter"/>
</dbReference>
<dbReference type="Gene3D" id="3.40.50.300">
    <property type="entry name" value="P-loop containing nucleotide triphosphate hydrolases"/>
    <property type="match status" value="1"/>
</dbReference>
<dbReference type="InterPro" id="IPR003593">
    <property type="entry name" value="AAA+_ATPase"/>
</dbReference>
<dbReference type="InterPro" id="IPR003439">
    <property type="entry name" value="ABC_transporter-like_ATP-bd"/>
</dbReference>
<dbReference type="InterPro" id="IPR017871">
    <property type="entry name" value="ABC_transporter-like_CS"/>
</dbReference>
<dbReference type="InterPro" id="IPR050153">
    <property type="entry name" value="Metal_Ion_Import_ABC"/>
</dbReference>
<dbReference type="InterPro" id="IPR027417">
    <property type="entry name" value="P-loop_NTPase"/>
</dbReference>
<dbReference type="PANTHER" id="PTHR42734">
    <property type="entry name" value="METAL TRANSPORT SYSTEM ATP-BINDING PROTEIN TM_0124-RELATED"/>
    <property type="match status" value="1"/>
</dbReference>
<dbReference type="PANTHER" id="PTHR42734:SF9">
    <property type="entry name" value="ZINC IMPORT ATP-BINDING PROTEIN ZNUC"/>
    <property type="match status" value="1"/>
</dbReference>
<dbReference type="Pfam" id="PF00005">
    <property type="entry name" value="ABC_tran"/>
    <property type="match status" value="1"/>
</dbReference>
<dbReference type="SMART" id="SM00382">
    <property type="entry name" value="AAA"/>
    <property type="match status" value="1"/>
</dbReference>
<dbReference type="SUPFAM" id="SSF52540">
    <property type="entry name" value="P-loop containing nucleoside triphosphate hydrolases"/>
    <property type="match status" value="1"/>
</dbReference>
<dbReference type="PROSITE" id="PS00211">
    <property type="entry name" value="ABC_TRANSPORTER_1"/>
    <property type="match status" value="1"/>
</dbReference>
<dbReference type="PROSITE" id="PS50893">
    <property type="entry name" value="ABC_TRANSPORTER_2"/>
    <property type="match status" value="1"/>
</dbReference>
<dbReference type="PROSITE" id="PS51298">
    <property type="entry name" value="ZNUC"/>
    <property type="match status" value="1"/>
</dbReference>
<evidence type="ECO:0000255" key="1">
    <source>
        <dbReference type="HAMAP-Rule" id="MF_01725"/>
    </source>
</evidence>
<name>ZNUC_RICPR</name>
<proteinExistence type="inferred from homology"/>
<sequence>MQKPIIEFRNVSKKFGNKTPISKVSFIVKKNNITTLIGPNGAGKTTIVRLMLGLEKPTSGEVIIDRKLKIGYVPQKFGLTTDIPITVKKFLDLLAPSHFNKNIKEISSFIDLEHIKKQEISKLSGGQFQKVVLACSIINNPDLIILDEPLQSLDVTSQQEFYQLIHFIRKKLNITVFMISHDLFTVIKNSDQVICLNGHICCSGVPHEITPNSEFSNALSSLGFYTHNHDHKH</sequence>
<keyword id="KW-0067">ATP-binding</keyword>
<keyword id="KW-0997">Cell inner membrane</keyword>
<keyword id="KW-1003">Cell membrane</keyword>
<keyword id="KW-0406">Ion transport</keyword>
<keyword id="KW-0472">Membrane</keyword>
<keyword id="KW-0547">Nucleotide-binding</keyword>
<keyword id="KW-1185">Reference proteome</keyword>
<keyword id="KW-1278">Translocase</keyword>
<keyword id="KW-0813">Transport</keyword>
<keyword id="KW-0862">Zinc</keyword>
<keyword id="KW-0864">Zinc transport</keyword>
<accession>Q9ZCC4</accession>
<gene>
    <name evidence="1" type="primary">znuC</name>
    <name type="ordered locus">RP834</name>
</gene>
<protein>
    <recommendedName>
        <fullName evidence="1">Zinc import ATP-binding protein ZnuC</fullName>
        <ecNumber evidence="1">7.2.2.20</ecNumber>
    </recommendedName>
</protein>
<feature type="chain" id="PRO_0000281542" description="Zinc import ATP-binding protein ZnuC">
    <location>
        <begin position="1"/>
        <end position="233"/>
    </location>
</feature>
<feature type="domain" description="ABC transporter" evidence="1">
    <location>
        <begin position="6"/>
        <end position="222"/>
    </location>
</feature>
<feature type="binding site" evidence="1">
    <location>
        <begin position="38"/>
        <end position="45"/>
    </location>
    <ligand>
        <name>ATP</name>
        <dbReference type="ChEBI" id="CHEBI:30616"/>
    </ligand>
</feature>
<reference key="1">
    <citation type="journal article" date="1998" name="Nature">
        <title>The genome sequence of Rickettsia prowazekii and the origin of mitochondria.</title>
        <authorList>
            <person name="Andersson S.G.E."/>
            <person name="Zomorodipour A."/>
            <person name="Andersson J.O."/>
            <person name="Sicheritz-Ponten T."/>
            <person name="Alsmark U.C.M."/>
            <person name="Podowski R.M."/>
            <person name="Naeslund A.K."/>
            <person name="Eriksson A.-S."/>
            <person name="Winkler H.H."/>
            <person name="Kurland C.G."/>
        </authorList>
    </citation>
    <scope>NUCLEOTIDE SEQUENCE [LARGE SCALE GENOMIC DNA]</scope>
    <source>
        <strain>Madrid E</strain>
    </source>
</reference>
<comment type="function">
    <text evidence="1">Part of the ABC transporter complex ZnuABC involved in zinc import. Responsible for energy coupling to the transport system.</text>
</comment>
<comment type="catalytic activity">
    <reaction evidence="1">
        <text>Zn(2+)(out) + ATP(in) + H2O(in) = Zn(2+)(in) + ADP(in) + phosphate(in) + H(+)(in)</text>
        <dbReference type="Rhea" id="RHEA:29795"/>
        <dbReference type="ChEBI" id="CHEBI:15377"/>
        <dbReference type="ChEBI" id="CHEBI:15378"/>
        <dbReference type="ChEBI" id="CHEBI:29105"/>
        <dbReference type="ChEBI" id="CHEBI:30616"/>
        <dbReference type="ChEBI" id="CHEBI:43474"/>
        <dbReference type="ChEBI" id="CHEBI:456216"/>
        <dbReference type="EC" id="7.2.2.20"/>
    </reaction>
</comment>
<comment type="subunit">
    <text evidence="1">The complex is composed of two ATP-binding proteins (ZnuC), two transmembrane proteins (ZnuB) and a solute-binding protein (ZnuA).</text>
</comment>
<comment type="subcellular location">
    <subcellularLocation>
        <location evidence="1">Cell inner membrane</location>
        <topology evidence="1">Peripheral membrane protein</topology>
    </subcellularLocation>
</comment>
<comment type="similarity">
    <text evidence="1">Belongs to the ABC transporter superfamily. Zinc importer (TC 3.A.1.15.5) family.</text>
</comment>